<protein>
    <recommendedName>
        <fullName evidence="1">tRNA 2-selenouridine synthase</fullName>
        <ecNumber evidence="1">2.9.1.3</ecNumber>
    </recommendedName>
</protein>
<accession>A0KRK0</accession>
<gene>
    <name evidence="1" type="primary">selU</name>
    <name type="ordered locus">Shewana3_0175</name>
</gene>
<evidence type="ECO:0000255" key="1">
    <source>
        <dbReference type="HAMAP-Rule" id="MF_01622"/>
    </source>
</evidence>
<dbReference type="EC" id="2.9.1.3" evidence="1"/>
<dbReference type="EMBL" id="CP000469">
    <property type="protein sequence ID" value="ABK46419.1"/>
    <property type="molecule type" value="Genomic_DNA"/>
</dbReference>
<dbReference type="RefSeq" id="WP_011715444.1">
    <property type="nucleotide sequence ID" value="NC_008577.1"/>
</dbReference>
<dbReference type="SMR" id="A0KRK0"/>
<dbReference type="STRING" id="94122.Shewana3_0175"/>
<dbReference type="KEGG" id="shn:Shewana3_0175"/>
<dbReference type="eggNOG" id="COG2603">
    <property type="taxonomic scope" value="Bacteria"/>
</dbReference>
<dbReference type="HOGENOM" id="CLU_043456_1_0_6"/>
<dbReference type="OrthoDB" id="9808735at2"/>
<dbReference type="Proteomes" id="UP000002589">
    <property type="component" value="Chromosome"/>
</dbReference>
<dbReference type="GO" id="GO:0016765">
    <property type="term" value="F:transferase activity, transferring alkyl or aryl (other than methyl) groups"/>
    <property type="evidence" value="ECO:0007669"/>
    <property type="project" value="UniProtKB-UniRule"/>
</dbReference>
<dbReference type="GO" id="GO:0043828">
    <property type="term" value="F:tRNA 2-selenouridine synthase activity"/>
    <property type="evidence" value="ECO:0007669"/>
    <property type="project" value="UniProtKB-EC"/>
</dbReference>
<dbReference type="GO" id="GO:0002098">
    <property type="term" value="P:tRNA wobble uridine modification"/>
    <property type="evidence" value="ECO:0007669"/>
    <property type="project" value="UniProtKB-UniRule"/>
</dbReference>
<dbReference type="FunFam" id="3.40.250.10:FF:000009">
    <property type="entry name" value="tRNA 2-selenouridine/geranyl-2-thiouridine synthase"/>
    <property type="match status" value="1"/>
</dbReference>
<dbReference type="Gene3D" id="3.40.250.10">
    <property type="entry name" value="Rhodanese-like domain"/>
    <property type="match status" value="1"/>
</dbReference>
<dbReference type="HAMAP" id="MF_01622">
    <property type="entry name" value="tRNA_sel_U_synth"/>
    <property type="match status" value="1"/>
</dbReference>
<dbReference type="InterPro" id="IPR001763">
    <property type="entry name" value="Rhodanese-like_dom"/>
</dbReference>
<dbReference type="InterPro" id="IPR036873">
    <property type="entry name" value="Rhodanese-like_dom_sf"/>
</dbReference>
<dbReference type="InterPro" id="IPR017582">
    <property type="entry name" value="SelU"/>
</dbReference>
<dbReference type="NCBIfam" id="NF008751">
    <property type="entry name" value="PRK11784.1-3"/>
    <property type="match status" value="1"/>
</dbReference>
<dbReference type="NCBIfam" id="TIGR03167">
    <property type="entry name" value="tRNA_sel_U_synt"/>
    <property type="match status" value="1"/>
</dbReference>
<dbReference type="PANTHER" id="PTHR30401">
    <property type="entry name" value="TRNA 2-SELENOURIDINE SYNTHASE"/>
    <property type="match status" value="1"/>
</dbReference>
<dbReference type="PANTHER" id="PTHR30401:SF0">
    <property type="entry name" value="TRNA 2-SELENOURIDINE SYNTHASE"/>
    <property type="match status" value="1"/>
</dbReference>
<dbReference type="Pfam" id="PF00581">
    <property type="entry name" value="Rhodanese"/>
    <property type="match status" value="1"/>
</dbReference>
<dbReference type="SMART" id="SM00450">
    <property type="entry name" value="RHOD"/>
    <property type="match status" value="1"/>
</dbReference>
<dbReference type="SUPFAM" id="SSF52821">
    <property type="entry name" value="Rhodanese/Cell cycle control phosphatase"/>
    <property type="match status" value="1"/>
</dbReference>
<dbReference type="PROSITE" id="PS50206">
    <property type="entry name" value="RHODANESE_3"/>
    <property type="match status" value="1"/>
</dbReference>
<organism>
    <name type="scientific">Shewanella sp. (strain ANA-3)</name>
    <dbReference type="NCBI Taxonomy" id="94122"/>
    <lineage>
        <taxon>Bacteria</taxon>
        <taxon>Pseudomonadati</taxon>
        <taxon>Pseudomonadota</taxon>
        <taxon>Gammaproteobacteria</taxon>
        <taxon>Alteromonadales</taxon>
        <taxon>Shewanellaceae</taxon>
        <taxon>Shewanella</taxon>
    </lineage>
</organism>
<comment type="function">
    <text evidence="1">Involved in the post-transcriptional modification of the uridine at the wobble position (U34) of tRNA(Lys), tRNA(Glu) and tRNA(Gln). Catalyzes the conversion of 2-thiouridine (S2U-RNA) to 2-selenouridine (Se2U-RNA). Acts in a two-step process involving geranylation of 2-thiouridine (S2U) to S-geranyl-2-thiouridine (geS2U) and subsequent selenation of the latter derivative to 2-selenouridine (Se2U) in the tRNA chain.</text>
</comment>
<comment type="catalytic activity">
    <reaction evidence="1">
        <text>5-methylaminomethyl-2-thiouridine(34) in tRNA + selenophosphate + (2E)-geranyl diphosphate + H2O + H(+) = 5-methylaminomethyl-2-selenouridine(34) in tRNA + (2E)-thiogeraniol + phosphate + diphosphate</text>
        <dbReference type="Rhea" id="RHEA:42716"/>
        <dbReference type="Rhea" id="RHEA-COMP:10195"/>
        <dbReference type="Rhea" id="RHEA-COMP:10196"/>
        <dbReference type="ChEBI" id="CHEBI:15377"/>
        <dbReference type="ChEBI" id="CHEBI:15378"/>
        <dbReference type="ChEBI" id="CHEBI:16144"/>
        <dbReference type="ChEBI" id="CHEBI:33019"/>
        <dbReference type="ChEBI" id="CHEBI:43474"/>
        <dbReference type="ChEBI" id="CHEBI:58057"/>
        <dbReference type="ChEBI" id="CHEBI:74455"/>
        <dbReference type="ChEBI" id="CHEBI:82743"/>
        <dbReference type="ChEBI" id="CHEBI:143703"/>
        <dbReference type="EC" id="2.9.1.3"/>
    </reaction>
    <physiologicalReaction direction="left-to-right" evidence="1">
        <dbReference type="Rhea" id="RHEA:42717"/>
    </physiologicalReaction>
</comment>
<comment type="catalytic activity">
    <reaction evidence="1">
        <text>5-methylaminomethyl-2-thiouridine(34) in tRNA + (2E)-geranyl diphosphate = 5-methylaminomethyl-S-(2E)-geranyl-thiouridine(34) in tRNA + diphosphate</text>
        <dbReference type="Rhea" id="RHEA:14085"/>
        <dbReference type="Rhea" id="RHEA-COMP:10195"/>
        <dbReference type="Rhea" id="RHEA-COMP:14654"/>
        <dbReference type="ChEBI" id="CHEBI:33019"/>
        <dbReference type="ChEBI" id="CHEBI:58057"/>
        <dbReference type="ChEBI" id="CHEBI:74455"/>
        <dbReference type="ChEBI" id="CHEBI:140632"/>
    </reaction>
    <physiologicalReaction direction="left-to-right" evidence="1">
        <dbReference type="Rhea" id="RHEA:14086"/>
    </physiologicalReaction>
</comment>
<comment type="catalytic activity">
    <reaction evidence="1">
        <text>5-methylaminomethyl-S-(2E)-geranyl-thiouridine(34) in tRNA + selenophosphate + H(+) = 5-methylaminomethyl-2-(Se-phospho)selenouridine(34) in tRNA + (2E)-thiogeraniol</text>
        <dbReference type="Rhea" id="RHEA:60172"/>
        <dbReference type="Rhea" id="RHEA-COMP:14654"/>
        <dbReference type="Rhea" id="RHEA-COMP:15523"/>
        <dbReference type="ChEBI" id="CHEBI:15378"/>
        <dbReference type="ChEBI" id="CHEBI:16144"/>
        <dbReference type="ChEBI" id="CHEBI:140632"/>
        <dbReference type="ChEBI" id="CHEBI:143702"/>
        <dbReference type="ChEBI" id="CHEBI:143703"/>
    </reaction>
    <physiologicalReaction direction="left-to-right" evidence="1">
        <dbReference type="Rhea" id="RHEA:60173"/>
    </physiologicalReaction>
</comment>
<comment type="catalytic activity">
    <reaction evidence="1">
        <text>5-methylaminomethyl-2-(Se-phospho)selenouridine(34) in tRNA + H2O = 5-methylaminomethyl-2-selenouridine(34) in tRNA + phosphate</text>
        <dbReference type="Rhea" id="RHEA:60176"/>
        <dbReference type="Rhea" id="RHEA-COMP:10196"/>
        <dbReference type="Rhea" id="RHEA-COMP:15523"/>
        <dbReference type="ChEBI" id="CHEBI:15377"/>
        <dbReference type="ChEBI" id="CHEBI:43474"/>
        <dbReference type="ChEBI" id="CHEBI:82743"/>
        <dbReference type="ChEBI" id="CHEBI:143702"/>
    </reaction>
    <physiologicalReaction direction="left-to-right" evidence="1">
        <dbReference type="Rhea" id="RHEA:60177"/>
    </physiologicalReaction>
</comment>
<comment type="subunit">
    <text evidence="1">Monomer.</text>
</comment>
<comment type="similarity">
    <text evidence="1">Belongs to the SelU family.</text>
</comment>
<keyword id="KW-0711">Selenium</keyword>
<keyword id="KW-0808">Transferase</keyword>
<sequence length="365" mass="41345">MTTKLIPAQQYHDIFIAGQPLIDLRAPIEFDRGAFPSSVNLPLMVDKEREKVGTCYKAQGQQAAIALGHSLVHGVVKQQRIDAWLNFLSANPEAYLYCFRGGLRSQLTQQWLQEAGVTAPYVQGGYKGMRQYLIGVIETAPSQQPLLSLSGMTGSGKTDFLRLRKEAIDLEGIANHRGSSFGKNIDPQPTQINFENQLAIALLRHQLGNHACLLLEDESFLIGRSALPQSFYSAMQTADIVVLEEDDDIRLTRLLDEYVHKMHLGFSERLGLEAGFEAFSHYLLQSLGSIRKRLGGKQYQELQDMMQQALSQQLNQNQTSQHMAWISLLLHKYYDPMYEYQLQKKAGNILFRGSHQAMHEWLDNY</sequence>
<feature type="chain" id="PRO_0000292712" description="tRNA 2-selenouridine synthase">
    <location>
        <begin position="1"/>
        <end position="365"/>
    </location>
</feature>
<feature type="domain" description="Rhodanese" evidence="1">
    <location>
        <begin position="15"/>
        <end position="138"/>
    </location>
</feature>
<feature type="active site" description="S-selanylcysteine intermediate" evidence="1">
    <location>
        <position position="98"/>
    </location>
</feature>
<name>SELU_SHESA</name>
<proteinExistence type="inferred from homology"/>
<reference key="1">
    <citation type="submission" date="2006-09" db="EMBL/GenBank/DDBJ databases">
        <title>Complete sequence of chromosome 1 of Shewanella sp. ANA-3.</title>
        <authorList>
            <person name="Copeland A."/>
            <person name="Lucas S."/>
            <person name="Lapidus A."/>
            <person name="Barry K."/>
            <person name="Detter J.C."/>
            <person name="Glavina del Rio T."/>
            <person name="Hammon N."/>
            <person name="Israni S."/>
            <person name="Dalin E."/>
            <person name="Tice H."/>
            <person name="Pitluck S."/>
            <person name="Chertkov O."/>
            <person name="Brettin T."/>
            <person name="Bruce D."/>
            <person name="Han C."/>
            <person name="Tapia R."/>
            <person name="Gilna P."/>
            <person name="Schmutz J."/>
            <person name="Larimer F."/>
            <person name="Land M."/>
            <person name="Hauser L."/>
            <person name="Kyrpides N."/>
            <person name="Kim E."/>
            <person name="Newman D."/>
            <person name="Salticov C."/>
            <person name="Konstantinidis K."/>
            <person name="Klappenback J."/>
            <person name="Tiedje J."/>
            <person name="Richardson P."/>
        </authorList>
    </citation>
    <scope>NUCLEOTIDE SEQUENCE [LARGE SCALE GENOMIC DNA]</scope>
    <source>
        <strain>ANA-3</strain>
    </source>
</reference>